<evidence type="ECO:0000256" key="1">
    <source>
        <dbReference type="SAM" id="MobiDB-lite"/>
    </source>
</evidence>
<evidence type="ECO:0000269" key="2">
    <source>
    </source>
</evidence>
<evidence type="ECO:0000269" key="3">
    <source>
    </source>
</evidence>
<evidence type="ECO:0000269" key="4">
    <source>
    </source>
</evidence>
<evidence type="ECO:0000269" key="5">
    <source>
    </source>
</evidence>
<evidence type="ECO:0000269" key="6">
    <source>
    </source>
</evidence>
<evidence type="ECO:0000269" key="7">
    <source>
    </source>
</evidence>
<evidence type="ECO:0000269" key="8">
    <source>
    </source>
</evidence>
<evidence type="ECO:0000305" key="9"/>
<evidence type="ECO:0007744" key="10">
    <source>
    </source>
</evidence>
<evidence type="ECO:0007744" key="11">
    <source>
    </source>
</evidence>
<evidence type="ECO:0007744" key="12">
    <source>
    </source>
</evidence>
<evidence type="ECO:0007744" key="13">
    <source>
    </source>
</evidence>
<evidence type="ECO:0007829" key="14">
    <source>
        <dbReference type="PDB" id="4C3I"/>
    </source>
</evidence>
<evidence type="ECO:0007829" key="15">
    <source>
        <dbReference type="PDB" id="6RQL"/>
    </source>
</evidence>
<evidence type="ECO:0007829" key="16">
    <source>
        <dbReference type="PDB" id="6RUI"/>
    </source>
</evidence>
<sequence length="142" mass="16151">MTEDIEQKKTATEVTPQEPKHIQEEEEQDVDMTGDEEQEEEPDREKIKLLTQATSEDGTSASFQIVEEDHTLGNALRYVIMKNPDVEFCGYSIPHPSENLLNIRIQTYGETTAVDALQKGLKDLMDLCDVVESKFTEKIKSM</sequence>
<reference key="1">
    <citation type="journal article" date="1991" name="J. Biol. Chem.">
        <title>RPC19, the gene for a subunit common to yeast RNA polymerases A (I) and C (III).</title>
        <authorList>
            <person name="Dequard-Chablat M."/>
            <person name="Riva M."/>
            <person name="Carles C."/>
            <person name="Sentenac A."/>
        </authorList>
    </citation>
    <scope>NUCLEOTIDE SEQUENCE [GENOMIC DNA]</scope>
    <scope>PARTIAL PROTEIN SEQUENCE</scope>
</reference>
<reference key="2">
    <citation type="journal article" date="1997" name="Yeast">
        <title>The DNA sequence of cosmid 14-13b from chromosome XIV of Saccharomyces cerevisiae reveals an unusually high number of overlapping open reading frames.</title>
        <authorList>
            <person name="de Antoni A."/>
            <person name="D'Angelo M."/>
            <person name="Dal Pero F."/>
            <person name="Sartorello F."/>
            <person name="Pandolfo D."/>
            <person name="Pallavicini A."/>
            <person name="Lanfranchi G."/>
            <person name="Valle G."/>
        </authorList>
    </citation>
    <scope>NUCLEOTIDE SEQUENCE [GENOMIC DNA]</scope>
</reference>
<reference key="3">
    <citation type="journal article" date="1997" name="Nature">
        <title>The nucleotide sequence of Saccharomyces cerevisiae chromosome XIV and its evolutionary implications.</title>
        <authorList>
            <person name="Philippsen P."/>
            <person name="Kleine K."/>
            <person name="Poehlmann R."/>
            <person name="Duesterhoeft A."/>
            <person name="Hamberg K."/>
            <person name="Hegemann J.H."/>
            <person name="Obermaier B."/>
            <person name="Urrestarazu L.A."/>
            <person name="Aert R."/>
            <person name="Albermann K."/>
            <person name="Altmann R."/>
            <person name="Andre B."/>
            <person name="Baladron V."/>
            <person name="Ballesta J.P.G."/>
            <person name="Becam A.-M."/>
            <person name="Beinhauer J.D."/>
            <person name="Boskovic J."/>
            <person name="Buitrago M.J."/>
            <person name="Bussereau F."/>
            <person name="Coster F."/>
            <person name="Crouzet M."/>
            <person name="D'Angelo M."/>
            <person name="Dal Pero F."/>
            <person name="De Antoni A."/>
            <person name="del Rey F."/>
            <person name="Doignon F."/>
            <person name="Domdey H."/>
            <person name="Dubois E."/>
            <person name="Fiedler T.A."/>
            <person name="Fleig U."/>
            <person name="Floeth M."/>
            <person name="Fritz C."/>
            <person name="Gaillardin C."/>
            <person name="Garcia-Cantalejo J.M."/>
            <person name="Glansdorff N."/>
            <person name="Goffeau A."/>
            <person name="Gueldener U."/>
            <person name="Herbert C.J."/>
            <person name="Heumann K."/>
            <person name="Heuss-Neitzel D."/>
            <person name="Hilbert H."/>
            <person name="Hinni K."/>
            <person name="Iraqui Houssaini I."/>
            <person name="Jacquet M."/>
            <person name="Jimenez A."/>
            <person name="Jonniaux J.-L."/>
            <person name="Karpfinger-Hartl L."/>
            <person name="Lanfranchi G."/>
            <person name="Lepingle A."/>
            <person name="Levesque H."/>
            <person name="Lyck R."/>
            <person name="Maftahi M."/>
            <person name="Mallet L."/>
            <person name="Maurer C.T.C."/>
            <person name="Messenguy F."/>
            <person name="Mewes H.-W."/>
            <person name="Moestl D."/>
            <person name="Nasr F."/>
            <person name="Nicaud J.-M."/>
            <person name="Niedenthal R.K."/>
            <person name="Pandolfo D."/>
            <person name="Pierard A."/>
            <person name="Piravandi E."/>
            <person name="Planta R.J."/>
            <person name="Pohl T.M."/>
            <person name="Purnelle B."/>
            <person name="Rebischung C."/>
            <person name="Remacha M.A."/>
            <person name="Revuelta J.L."/>
            <person name="Rinke M."/>
            <person name="Saiz J.E."/>
            <person name="Sartorello F."/>
            <person name="Scherens B."/>
            <person name="Sen-Gupta M."/>
            <person name="Soler-Mira A."/>
            <person name="Urbanus J.H.M."/>
            <person name="Valle G."/>
            <person name="Van Dyck L."/>
            <person name="Verhasselt P."/>
            <person name="Vierendeels F."/>
            <person name="Vissers S."/>
            <person name="Voet M."/>
            <person name="Volckaert G."/>
            <person name="Wach A."/>
            <person name="Wambutt R."/>
            <person name="Wedler H."/>
            <person name="Zollner A."/>
            <person name="Hani J."/>
        </authorList>
    </citation>
    <scope>NUCLEOTIDE SEQUENCE [LARGE SCALE GENOMIC DNA]</scope>
    <source>
        <strain>ATCC 204508 / S288c</strain>
    </source>
</reference>
<reference key="4">
    <citation type="journal article" date="2014" name="G3 (Bethesda)">
        <title>The reference genome sequence of Saccharomyces cerevisiae: Then and now.</title>
        <authorList>
            <person name="Engel S.R."/>
            <person name="Dietrich F.S."/>
            <person name="Fisk D.G."/>
            <person name="Binkley G."/>
            <person name="Balakrishnan R."/>
            <person name="Costanzo M.C."/>
            <person name="Dwight S.S."/>
            <person name="Hitz B.C."/>
            <person name="Karra K."/>
            <person name="Nash R.S."/>
            <person name="Weng S."/>
            <person name="Wong E.D."/>
            <person name="Lloyd P."/>
            <person name="Skrzypek M.S."/>
            <person name="Miyasato S.R."/>
            <person name="Simison M."/>
            <person name="Cherry J.M."/>
        </authorList>
    </citation>
    <scope>GENOME REANNOTATION</scope>
    <source>
        <strain>ATCC 204508 / S288c</strain>
    </source>
</reference>
<reference key="5">
    <citation type="journal article" date="2007" name="Genome Res.">
        <title>Approaching a complete repository of sequence-verified protein-encoding clones for Saccharomyces cerevisiae.</title>
        <authorList>
            <person name="Hu Y."/>
            <person name="Rolfs A."/>
            <person name="Bhullar B."/>
            <person name="Murthy T.V.S."/>
            <person name="Zhu C."/>
            <person name="Berger M.F."/>
            <person name="Camargo A.A."/>
            <person name="Kelley F."/>
            <person name="McCarron S."/>
            <person name="Jepson D."/>
            <person name="Richardson A."/>
            <person name="Raphael J."/>
            <person name="Moreira D."/>
            <person name="Taycher E."/>
            <person name="Zuo D."/>
            <person name="Mohr S."/>
            <person name="Kane M.F."/>
            <person name="Williamson J."/>
            <person name="Simpson A.J.G."/>
            <person name="Bulyk M.L."/>
            <person name="Harlow E."/>
            <person name="Marsischky G."/>
            <person name="Kolodner R.D."/>
            <person name="LaBaer J."/>
        </authorList>
    </citation>
    <scope>NUCLEOTIDE SEQUENCE [GENOMIC DNA]</scope>
    <source>
        <strain>ATCC 204508 / S288c</strain>
    </source>
</reference>
<reference key="6">
    <citation type="journal article" date="1998" name="Cold Spring Harb. Symp. Quant. Biol.">
        <title>The yeast RNA polymerase III transcription machinery: a paradigm for eukaryotic gene activation.</title>
        <authorList>
            <person name="Chedin S."/>
            <person name="Ferri M.L."/>
            <person name="Peyroche G."/>
            <person name="Andrau J.-C."/>
            <person name="Jourdain S."/>
            <person name="Lefebvre O."/>
            <person name="Werner M."/>
            <person name="Carles C."/>
            <person name="Sentenac A."/>
        </authorList>
    </citation>
    <scope>REVIEW ON THE RNA POL III COMPLEX</scope>
</reference>
<reference key="7">
    <citation type="journal article" date="2001" name="Proc. Natl. Acad. Sci. U.S.A.">
        <title>Differential roles of phosphorylation in the formation of transcriptional active RNA polymerase I.</title>
        <authorList>
            <person name="Fath S."/>
            <person name="Milkereit P."/>
            <person name="Peyroche G."/>
            <person name="Riva M."/>
            <person name="Carles C."/>
            <person name="Tschochner H."/>
        </authorList>
    </citation>
    <scope>IDENTIFICATION IN THE RNA POL I COMPLEX</scope>
</reference>
<reference key="8">
    <citation type="journal article" date="1993" name="Proc. Natl. Acad. Sci. U.S.A.">
        <title>Interactions between three common subunits of yeast RNA polymerases I and III.</title>
        <authorList>
            <person name="Lalo D."/>
            <person name="Carles C."/>
            <person name="Sentenac A."/>
            <person name="Thuriaux P."/>
        </authorList>
    </citation>
    <scope>INTERACTION WITH AC40</scope>
</reference>
<reference key="9">
    <citation type="journal article" date="2003" name="Nature">
        <title>Global analysis of protein localization in budding yeast.</title>
        <authorList>
            <person name="Huh W.-K."/>
            <person name="Falvo J.V."/>
            <person name="Gerke L.C."/>
            <person name="Carroll A.S."/>
            <person name="Howson R.W."/>
            <person name="Weissman J.S."/>
            <person name="O'Shea E.K."/>
        </authorList>
    </citation>
    <scope>SUBCELLULAR LOCATION [LARGE SCALE ANALYSIS]</scope>
</reference>
<reference key="10">
    <citation type="journal article" date="2003" name="Nature">
        <title>Global analysis of protein expression in yeast.</title>
        <authorList>
            <person name="Ghaemmaghami S."/>
            <person name="Huh W.-K."/>
            <person name="Bower K."/>
            <person name="Howson R.W."/>
            <person name="Belle A."/>
            <person name="Dephoure N."/>
            <person name="O'Shea E.K."/>
            <person name="Weissman J.S."/>
        </authorList>
    </citation>
    <scope>LEVEL OF PROTEIN EXPRESSION [LARGE SCALE ANALYSIS]</scope>
</reference>
<reference key="11">
    <citation type="journal article" date="2007" name="J. Proteome Res.">
        <title>Large-scale phosphorylation analysis of alpha-factor-arrested Saccharomyces cerevisiae.</title>
        <authorList>
            <person name="Li X."/>
            <person name="Gerber S.A."/>
            <person name="Rudner A.D."/>
            <person name="Beausoleil S.A."/>
            <person name="Haas W."/>
            <person name="Villen J."/>
            <person name="Elias J.E."/>
            <person name="Gygi S.P."/>
        </authorList>
    </citation>
    <scope>PHOSPHORYLATION [LARGE SCALE ANALYSIS] AT THR-33</scope>
    <scope>IDENTIFICATION BY MASS SPECTROMETRY [LARGE SCALE ANALYSIS]</scope>
    <source>
        <strain>ADR376</strain>
    </source>
</reference>
<reference key="12">
    <citation type="journal article" date="2008" name="Mol. Cell. Proteomics">
        <title>A multidimensional chromatography technology for in-depth phosphoproteome analysis.</title>
        <authorList>
            <person name="Albuquerque C.P."/>
            <person name="Smolka M.B."/>
            <person name="Payne S.H."/>
            <person name="Bafna V."/>
            <person name="Eng J."/>
            <person name="Zhou H."/>
        </authorList>
    </citation>
    <scope>PHOSPHORYLATION [LARGE SCALE ANALYSIS] AT THR-15 AND THR-33</scope>
    <scope>IDENTIFICATION BY MASS SPECTROMETRY [LARGE SCALE ANALYSIS]</scope>
</reference>
<reference key="13">
    <citation type="journal article" date="2009" name="Science">
        <title>Global analysis of Cdk1 substrate phosphorylation sites provides insights into evolution.</title>
        <authorList>
            <person name="Holt L.J."/>
            <person name="Tuch B.B."/>
            <person name="Villen J."/>
            <person name="Johnson A.D."/>
            <person name="Gygi S.P."/>
            <person name="Morgan D.O."/>
        </authorList>
    </citation>
    <scope>PHOSPHORYLATION [LARGE SCALE ANALYSIS] AT THR-15 AND THR-33</scope>
    <scope>IDENTIFICATION BY MASS SPECTROMETRY [LARGE SCALE ANALYSIS]</scope>
</reference>
<reference key="14">
    <citation type="journal article" date="2012" name="Proteomics">
        <title>Sites of ubiquitin attachment in Saccharomyces cerevisiae.</title>
        <authorList>
            <person name="Starita L.M."/>
            <person name="Lo R.S."/>
            <person name="Eng J.K."/>
            <person name="von Haller P.D."/>
            <person name="Fields S."/>
        </authorList>
    </citation>
    <scope>UBIQUITINATION [LARGE SCALE ANALYSIS] AT LYS-134</scope>
    <scope>IDENTIFICATION BY MASS SPECTROMETRY [LARGE SCALE ANALYSIS]</scope>
</reference>
<reference key="15">
    <citation type="journal article" date="2006" name="Mol. Cell">
        <title>Structural biology of RNA polymerase III: subcomplex C17/25 X-ray structure and 11 subunit enzyme model.</title>
        <authorList>
            <person name="Jasiak A.J."/>
            <person name="Armache K.J."/>
            <person name="Martens B."/>
            <person name="Jansen R.P."/>
            <person name="Cramer P."/>
        </authorList>
    </citation>
    <scope>3D-STRUCTURE MODELING OF THE POL III CORE COMPLEX</scope>
</reference>
<reference key="16">
    <citation type="journal article" date="2007" name="Cell">
        <title>Functional architecture of RNA polymerase I.</title>
        <authorList>
            <person name="Kuhn C.D."/>
            <person name="Geiger S.R."/>
            <person name="Baumli S."/>
            <person name="Gartmann M."/>
            <person name="Gerber J."/>
            <person name="Jennebach S."/>
            <person name="Mielke T."/>
            <person name="Tschochner H."/>
            <person name="Beckmann R."/>
            <person name="Cramer P."/>
        </authorList>
    </citation>
    <scope>STRUCTURE BY ELECTRON MICROSCOPY (12.00 ANGSTROMS) OF THE POL I COMPLEX</scope>
    <scope>FUNCTION</scope>
    <scope>SUBUNIT</scope>
</reference>
<reference key="17">
    <citation type="journal article" date="2013" name="Nature">
        <title>Crystal structure of the 14-subunit RNA polymerase I.</title>
        <authorList>
            <person name="Fernandez-Tornero C."/>
            <person name="Moreno-Morcillo M."/>
            <person name="Rashid U.J."/>
            <person name="Taylor N.M."/>
            <person name="Ruiz F.M."/>
            <person name="Gruene T."/>
            <person name="Legrand P."/>
            <person name="Steuerwald U."/>
            <person name="Muller C.W."/>
        </authorList>
    </citation>
    <scope>X-RAY CRYSTALLOGRAPHY (3.0 ANGSTROMS) OF THE POL I COMPLEX</scope>
    <scope>FUNCTION</scope>
    <scope>SUBUNIT</scope>
</reference>
<reference key="18">
    <citation type="journal article" date="2013" name="Nature">
        <title>RNA polymerase I structure and transcription regulation.</title>
        <authorList>
            <person name="Engel C."/>
            <person name="Sainsbury S."/>
            <person name="Cheung A.C."/>
            <person name="Kostrewa D."/>
            <person name="Cramer P."/>
        </authorList>
    </citation>
    <scope>X-RAY CRYSTALLOGRAPHY (2.8 ANGSTROMS) OF THE POL I COMPLEX</scope>
    <scope>FUNCTION</scope>
    <scope>SUBUNIT</scope>
</reference>
<keyword id="KW-0002">3D-structure</keyword>
<keyword id="KW-0903">Direct protein sequencing</keyword>
<keyword id="KW-0240">DNA-directed RNA polymerase</keyword>
<keyword id="KW-1017">Isopeptide bond</keyword>
<keyword id="KW-0539">Nucleus</keyword>
<keyword id="KW-0597">Phosphoprotein</keyword>
<keyword id="KW-1185">Reference proteome</keyword>
<keyword id="KW-0690">Ribosome biogenesis</keyword>
<keyword id="KW-0804">Transcription</keyword>
<keyword id="KW-0832">Ubl conjugation</keyword>
<comment type="function">
    <text evidence="5 6 7">DNA-dependent RNA polymerases catalyze the transcription of DNA into RNA using the four ribonucleoside triphosphates as substrates. Common core component of RNA polymerases I and III which synthesize ribosomal RNA precursors and small RNAs, such as 5S rRNA and tRNAs, respectively.</text>
</comment>
<comment type="subunit">
    <text evidence="2 5 6 7 8">Component of the RNA polymerase I (Pol I) and RNA polymerase III (Pol III) complexes. Component of the RNA polymerase I (Pol I) complex consisting of 14 subunits: RPA135, RPA190, RPC40, RPA14, RPB5, RPO26, RPA43, RPB8, RPA12, RPB10, RPC19, RPC10, RPA49 and RPA34. The complex is composed of a horseshoe-shaped core containing ten subunits (RPA135, RPA190, RPB5, RPO26, RPB8, RPB10, RPC10, RPA12, RPC19 and RPC40) where RPA135 and RPA190 form the DNA-binding cleft. Outside of the core, RPA14 and RPA43 form the stalk that mediates interactions with transcription initiation factors and newly synthesized RNA. Component of the RNA polymerase III (Pol III) complex consisting of 17 subunits. Directly interacts with the RPC40 subunit.</text>
</comment>
<comment type="interaction">
    <interactant intactId="EBI-15846">
        <id>P28000</id>
    </interactant>
    <interactant intactId="EBI-15831">
        <id>P07703</id>
        <label>RPC40</label>
    </interactant>
    <organismsDiffer>false</organismsDiffer>
    <experiments>6</experiments>
</comment>
<comment type="subcellular location">
    <subcellularLocation>
        <location evidence="3">Nucleus</location>
        <location evidence="3">Nucleolus</location>
    </subcellularLocation>
</comment>
<comment type="miscellaneous">
    <text evidence="4">Present with 8680 molecules/cell in log phase SD medium.</text>
</comment>
<comment type="similarity">
    <text evidence="9">Belongs to the archaeal Rpo11/eukaryotic RPB11/RPC19 RNA polymerase subunit family.</text>
</comment>
<proteinExistence type="evidence at protein level"/>
<dbReference type="EMBL" id="M64991">
    <property type="protein sequence ID" value="AAA34998.1"/>
    <property type="molecule type" value="Genomic_DNA"/>
</dbReference>
<dbReference type="EMBL" id="Z69382">
    <property type="protein sequence ID" value="CAA93394.1"/>
    <property type="molecule type" value="Genomic_DNA"/>
</dbReference>
<dbReference type="EMBL" id="Z71390">
    <property type="protein sequence ID" value="CAA95994.1"/>
    <property type="molecule type" value="Genomic_DNA"/>
</dbReference>
<dbReference type="EMBL" id="AY558001">
    <property type="protein sequence ID" value="AAS56327.1"/>
    <property type="molecule type" value="Genomic_DNA"/>
</dbReference>
<dbReference type="EMBL" id="BK006947">
    <property type="protein sequence ID" value="DAA10434.1"/>
    <property type="molecule type" value="Genomic_DNA"/>
</dbReference>
<dbReference type="PIR" id="A39418">
    <property type="entry name" value="A39418"/>
</dbReference>
<dbReference type="RefSeq" id="NP_014286.1">
    <property type="nucleotide sequence ID" value="NM_001182951.1"/>
</dbReference>
<dbReference type="PDB" id="4C2M">
    <property type="method" value="X-ray"/>
    <property type="resolution" value="2.80 A"/>
    <property type="chains" value="K/Z=1-142"/>
</dbReference>
<dbReference type="PDB" id="4C3H">
    <property type="method" value="X-ray"/>
    <property type="resolution" value="3.27 A"/>
    <property type="chains" value="K=1-142"/>
</dbReference>
<dbReference type="PDB" id="4C3I">
    <property type="method" value="X-ray"/>
    <property type="resolution" value="3.00 A"/>
    <property type="chains" value="K=1-142"/>
</dbReference>
<dbReference type="PDB" id="4C3J">
    <property type="method" value="X-ray"/>
    <property type="resolution" value="3.35 A"/>
    <property type="chains" value="K=1-142"/>
</dbReference>
<dbReference type="PDB" id="4YM7">
    <property type="method" value="X-ray"/>
    <property type="resolution" value="5.50 A"/>
    <property type="chains" value="AK/BK/CK/DK/EK/FK=1-142"/>
</dbReference>
<dbReference type="PDB" id="5FJ8">
    <property type="method" value="EM"/>
    <property type="resolution" value="3.90 A"/>
    <property type="chains" value="K=1-142"/>
</dbReference>
<dbReference type="PDB" id="5FJ9">
    <property type="method" value="EM"/>
    <property type="resolution" value="4.60 A"/>
    <property type="chains" value="K=1-142"/>
</dbReference>
<dbReference type="PDB" id="5FJA">
    <property type="method" value="EM"/>
    <property type="resolution" value="4.65 A"/>
    <property type="chains" value="K=1-142"/>
</dbReference>
<dbReference type="PDB" id="5G5L">
    <property type="method" value="EM"/>
    <property type="resolution" value="4.80 A"/>
    <property type="chains" value="K=1-142"/>
</dbReference>
<dbReference type="PDB" id="5LMX">
    <property type="method" value="EM"/>
    <property type="resolution" value="4.90 A"/>
    <property type="chains" value="K=1-142"/>
</dbReference>
<dbReference type="PDB" id="5M3F">
    <property type="method" value="EM"/>
    <property type="resolution" value="3.80 A"/>
    <property type="chains" value="K=1-142"/>
</dbReference>
<dbReference type="PDB" id="5M3M">
    <property type="method" value="EM"/>
    <property type="resolution" value="4.00 A"/>
    <property type="chains" value="K=1-142"/>
</dbReference>
<dbReference type="PDB" id="5M5W">
    <property type="method" value="EM"/>
    <property type="resolution" value="3.80 A"/>
    <property type="chains" value="K=1-142"/>
</dbReference>
<dbReference type="PDB" id="5M5X">
    <property type="method" value="EM"/>
    <property type="resolution" value="4.00 A"/>
    <property type="chains" value="K=1-142"/>
</dbReference>
<dbReference type="PDB" id="5M5Y">
    <property type="method" value="EM"/>
    <property type="resolution" value="4.00 A"/>
    <property type="chains" value="K=1-142"/>
</dbReference>
<dbReference type="PDB" id="5M64">
    <property type="method" value="EM"/>
    <property type="resolution" value="4.60 A"/>
    <property type="chains" value="K=1-142"/>
</dbReference>
<dbReference type="PDB" id="5N5Y">
    <property type="method" value="EM"/>
    <property type="resolution" value="7.70 A"/>
    <property type="chains" value="K=1-142"/>
</dbReference>
<dbReference type="PDB" id="5N5Z">
    <property type="method" value="EM"/>
    <property type="resolution" value="7.70 A"/>
    <property type="chains" value="K=1-142"/>
</dbReference>
<dbReference type="PDB" id="5N60">
    <property type="method" value="EM"/>
    <property type="resolution" value="7.70 A"/>
    <property type="chains" value="K=1-142"/>
</dbReference>
<dbReference type="PDB" id="5N61">
    <property type="method" value="EM"/>
    <property type="resolution" value="3.40 A"/>
    <property type="chains" value="K=1-142"/>
</dbReference>
<dbReference type="PDB" id="5OA1">
    <property type="method" value="EM"/>
    <property type="resolution" value="4.40 A"/>
    <property type="chains" value="K=1-142"/>
</dbReference>
<dbReference type="PDB" id="5W5Y">
    <property type="method" value="EM"/>
    <property type="resolution" value="3.80 A"/>
    <property type="chains" value="K=1-142"/>
</dbReference>
<dbReference type="PDB" id="5W64">
    <property type="method" value="EM"/>
    <property type="resolution" value="4.20 A"/>
    <property type="chains" value="K=1-142"/>
</dbReference>
<dbReference type="PDB" id="5W65">
    <property type="method" value="EM"/>
    <property type="resolution" value="4.30 A"/>
    <property type="chains" value="K=1-142"/>
</dbReference>
<dbReference type="PDB" id="5W66">
    <property type="method" value="EM"/>
    <property type="resolution" value="3.90 A"/>
    <property type="chains" value="K=1-142"/>
</dbReference>
<dbReference type="PDB" id="6CNB">
    <property type="method" value="EM"/>
    <property type="resolution" value="4.10 A"/>
    <property type="chains" value="K=1-142"/>
</dbReference>
<dbReference type="PDB" id="6CNC">
    <property type="method" value="EM"/>
    <property type="resolution" value="4.10 A"/>
    <property type="chains" value="K=1-142"/>
</dbReference>
<dbReference type="PDB" id="6CND">
    <property type="method" value="EM"/>
    <property type="resolution" value="4.80 A"/>
    <property type="chains" value="K=1-142"/>
</dbReference>
<dbReference type="PDB" id="6CNF">
    <property type="method" value="EM"/>
    <property type="resolution" value="4.50 A"/>
    <property type="chains" value="K=1-142"/>
</dbReference>
<dbReference type="PDB" id="6EU0">
    <property type="method" value="EM"/>
    <property type="resolution" value="4.00 A"/>
    <property type="chains" value="K=1-142"/>
</dbReference>
<dbReference type="PDB" id="6EU1">
    <property type="method" value="EM"/>
    <property type="resolution" value="3.40 A"/>
    <property type="chains" value="K=1-142"/>
</dbReference>
<dbReference type="PDB" id="6EU2">
    <property type="method" value="EM"/>
    <property type="resolution" value="3.40 A"/>
    <property type="chains" value="K=1-142"/>
</dbReference>
<dbReference type="PDB" id="6EU3">
    <property type="method" value="EM"/>
    <property type="resolution" value="3.30 A"/>
    <property type="chains" value="K=1-142"/>
</dbReference>
<dbReference type="PDB" id="6F40">
    <property type="method" value="EM"/>
    <property type="resolution" value="3.70 A"/>
    <property type="chains" value="K=1-142"/>
</dbReference>
<dbReference type="PDB" id="6F41">
    <property type="method" value="EM"/>
    <property type="resolution" value="4.30 A"/>
    <property type="chains" value="K=1-142"/>
</dbReference>
<dbReference type="PDB" id="6F42">
    <property type="method" value="EM"/>
    <property type="resolution" value="5.50 A"/>
    <property type="chains" value="K=1-142"/>
</dbReference>
<dbReference type="PDB" id="6F44">
    <property type="method" value="EM"/>
    <property type="resolution" value="4.20 A"/>
    <property type="chains" value="K=1-142"/>
</dbReference>
<dbReference type="PDB" id="6H67">
    <property type="method" value="EM"/>
    <property type="resolution" value="3.60 A"/>
    <property type="chains" value="K=1-142"/>
</dbReference>
<dbReference type="PDB" id="6H68">
    <property type="method" value="EM"/>
    <property type="resolution" value="4.60 A"/>
    <property type="chains" value="K=1-142"/>
</dbReference>
<dbReference type="PDB" id="6HKO">
    <property type="method" value="EM"/>
    <property type="resolution" value="3.42 A"/>
    <property type="chains" value="K=1-142"/>
</dbReference>
<dbReference type="PDB" id="6HLQ">
    <property type="method" value="EM"/>
    <property type="resolution" value="3.18 A"/>
    <property type="chains" value="K=1-142"/>
</dbReference>
<dbReference type="PDB" id="6HLR">
    <property type="method" value="EM"/>
    <property type="resolution" value="3.18 A"/>
    <property type="chains" value="K=1-142"/>
</dbReference>
<dbReference type="PDB" id="6HLS">
    <property type="method" value="EM"/>
    <property type="resolution" value="3.21 A"/>
    <property type="chains" value="K=1-142"/>
</dbReference>
<dbReference type="PDB" id="6RQH">
    <property type="method" value="EM"/>
    <property type="resolution" value="3.70 A"/>
    <property type="chains" value="K=1-142"/>
</dbReference>
<dbReference type="PDB" id="6RQL">
    <property type="method" value="EM"/>
    <property type="resolution" value="2.90 A"/>
    <property type="chains" value="K=1-142"/>
</dbReference>
<dbReference type="PDB" id="6RQT">
    <property type="method" value="EM"/>
    <property type="resolution" value="4.00 A"/>
    <property type="chains" value="K=1-142"/>
</dbReference>
<dbReference type="PDB" id="6RRD">
    <property type="method" value="EM"/>
    <property type="resolution" value="3.10 A"/>
    <property type="chains" value="K=1-142"/>
</dbReference>
<dbReference type="PDB" id="6RUI">
    <property type="method" value="EM"/>
    <property type="resolution" value="2.70 A"/>
    <property type="chains" value="K=1-142"/>
</dbReference>
<dbReference type="PDB" id="6RUO">
    <property type="method" value="EM"/>
    <property type="resolution" value="3.50 A"/>
    <property type="chains" value="K=1-142"/>
</dbReference>
<dbReference type="PDB" id="6RWE">
    <property type="method" value="EM"/>
    <property type="resolution" value="3.00 A"/>
    <property type="chains" value="K=1-142"/>
</dbReference>
<dbReference type="PDB" id="6TPS">
    <property type="method" value="EM"/>
    <property type="resolution" value="3.54 A"/>
    <property type="chains" value="K=1-142"/>
</dbReference>
<dbReference type="PDB" id="6TUT">
    <property type="method" value="EM"/>
    <property type="resolution" value="3.25 A"/>
    <property type="chains" value="K=1-142"/>
</dbReference>
<dbReference type="PDB" id="7Z0H">
    <property type="method" value="EM"/>
    <property type="resolution" value="2.60 A"/>
    <property type="chains" value="K=1-142"/>
</dbReference>
<dbReference type="PDB" id="7Z1L">
    <property type="method" value="EM"/>
    <property type="resolution" value="2.80 A"/>
    <property type="chains" value="K=1-142"/>
</dbReference>
<dbReference type="PDB" id="7Z1M">
    <property type="method" value="EM"/>
    <property type="resolution" value="3.40 A"/>
    <property type="chains" value="K=1-142"/>
</dbReference>
<dbReference type="PDB" id="7Z1N">
    <property type="method" value="EM"/>
    <property type="resolution" value="3.90 A"/>
    <property type="chains" value="K=1-142"/>
</dbReference>
<dbReference type="PDB" id="7Z1O">
    <property type="method" value="EM"/>
    <property type="resolution" value="2.70 A"/>
    <property type="chains" value="K=1-142"/>
</dbReference>
<dbReference type="PDB" id="7Z2Z">
    <property type="method" value="EM"/>
    <property type="resolution" value="3.07 A"/>
    <property type="chains" value="K=1-142"/>
</dbReference>
<dbReference type="PDB" id="7Z30">
    <property type="method" value="EM"/>
    <property type="resolution" value="2.90 A"/>
    <property type="chains" value="K=1-142"/>
</dbReference>
<dbReference type="PDB" id="7Z31">
    <property type="method" value="EM"/>
    <property type="resolution" value="2.76 A"/>
    <property type="chains" value="K=1-142"/>
</dbReference>
<dbReference type="PDB" id="8BWS">
    <property type="method" value="EM"/>
    <property type="resolution" value="3.20 A"/>
    <property type="chains" value="K=1-142"/>
</dbReference>
<dbReference type="PDBsum" id="4C2M"/>
<dbReference type="PDBsum" id="4C3H"/>
<dbReference type="PDBsum" id="4C3I"/>
<dbReference type="PDBsum" id="4C3J"/>
<dbReference type="PDBsum" id="4YM7"/>
<dbReference type="PDBsum" id="5FJ8"/>
<dbReference type="PDBsum" id="5FJ9"/>
<dbReference type="PDBsum" id="5FJA"/>
<dbReference type="PDBsum" id="5G5L"/>
<dbReference type="PDBsum" id="5LMX"/>
<dbReference type="PDBsum" id="5M3F"/>
<dbReference type="PDBsum" id="5M3M"/>
<dbReference type="PDBsum" id="5M5W"/>
<dbReference type="PDBsum" id="5M5X"/>
<dbReference type="PDBsum" id="5M5Y"/>
<dbReference type="PDBsum" id="5M64"/>
<dbReference type="PDBsum" id="5N5Y"/>
<dbReference type="PDBsum" id="5N5Z"/>
<dbReference type="PDBsum" id="5N60"/>
<dbReference type="PDBsum" id="5N61"/>
<dbReference type="PDBsum" id="5OA1"/>
<dbReference type="PDBsum" id="5W5Y"/>
<dbReference type="PDBsum" id="5W64"/>
<dbReference type="PDBsum" id="5W65"/>
<dbReference type="PDBsum" id="5W66"/>
<dbReference type="PDBsum" id="6CNB"/>
<dbReference type="PDBsum" id="6CNC"/>
<dbReference type="PDBsum" id="6CND"/>
<dbReference type="PDBsum" id="6CNF"/>
<dbReference type="PDBsum" id="6EU0"/>
<dbReference type="PDBsum" id="6EU1"/>
<dbReference type="PDBsum" id="6EU2"/>
<dbReference type="PDBsum" id="6EU3"/>
<dbReference type="PDBsum" id="6F40"/>
<dbReference type="PDBsum" id="6F41"/>
<dbReference type="PDBsum" id="6F42"/>
<dbReference type="PDBsum" id="6F44"/>
<dbReference type="PDBsum" id="6H67"/>
<dbReference type="PDBsum" id="6H68"/>
<dbReference type="PDBsum" id="6HKO"/>
<dbReference type="PDBsum" id="6HLQ"/>
<dbReference type="PDBsum" id="6HLR"/>
<dbReference type="PDBsum" id="6HLS"/>
<dbReference type="PDBsum" id="6RQH"/>
<dbReference type="PDBsum" id="6RQL"/>
<dbReference type="PDBsum" id="6RQT"/>
<dbReference type="PDBsum" id="6RRD"/>
<dbReference type="PDBsum" id="6RUI"/>
<dbReference type="PDBsum" id="6RUO"/>
<dbReference type="PDBsum" id="6RWE"/>
<dbReference type="PDBsum" id="6TPS"/>
<dbReference type="PDBsum" id="6TUT"/>
<dbReference type="PDBsum" id="7Z0H"/>
<dbReference type="PDBsum" id="7Z1L"/>
<dbReference type="PDBsum" id="7Z1M"/>
<dbReference type="PDBsum" id="7Z1N"/>
<dbReference type="PDBsum" id="7Z1O"/>
<dbReference type="PDBsum" id="7Z2Z"/>
<dbReference type="PDBsum" id="7Z30"/>
<dbReference type="PDBsum" id="7Z31"/>
<dbReference type="PDBsum" id="8BWS"/>
<dbReference type="EMDB" id="EMD-0146"/>
<dbReference type="EMDB" id="EMD-0147"/>
<dbReference type="EMDB" id="EMD-0238"/>
<dbReference type="EMDB" id="EMD-0239"/>
<dbReference type="EMDB" id="EMD-0240"/>
<dbReference type="EMDB" id="EMD-0241"/>
<dbReference type="EMDB" id="EMD-10006"/>
<dbReference type="EMDB" id="EMD-10007"/>
<dbReference type="EMDB" id="EMD-10038"/>
<dbReference type="EMDB" id="EMD-10544"/>
<dbReference type="EMDB" id="EMD-10595"/>
<dbReference type="EMDB" id="EMD-14421"/>
<dbReference type="EMDB" id="EMD-14447"/>
<dbReference type="EMDB" id="EMD-14448"/>
<dbReference type="EMDB" id="EMD-14449"/>
<dbReference type="EMDB" id="EMD-14451"/>
<dbReference type="EMDB" id="EMD-14468"/>
<dbReference type="EMDB" id="EMD-14469"/>
<dbReference type="EMDB" id="EMD-14470"/>
<dbReference type="EMDB" id="EMD-16299"/>
<dbReference type="EMDB" id="EMD-3446"/>
<dbReference type="EMDB" id="EMD-3447"/>
<dbReference type="EMDB" id="EMD-3448"/>
<dbReference type="EMDB" id="EMD-3449"/>
<dbReference type="EMDB" id="EMD-3590"/>
<dbReference type="EMDB" id="EMD-3591"/>
<dbReference type="EMDB" id="EMD-3592"/>
<dbReference type="EMDB" id="EMD-3593"/>
<dbReference type="EMDB" id="EMD-3727"/>
<dbReference type="EMDB" id="EMD-3955"/>
<dbReference type="EMDB" id="EMD-3956"/>
<dbReference type="EMDB" id="EMD-3957"/>
<dbReference type="EMDB" id="EMD-3958"/>
<dbReference type="EMDB" id="EMD-4088"/>
<dbReference type="EMDB" id="EMD-4147"/>
<dbReference type="EMDB" id="EMD-4148"/>
<dbReference type="EMDB" id="EMD-4180"/>
<dbReference type="EMDB" id="EMD-4181"/>
<dbReference type="EMDB" id="EMD-4182"/>
<dbReference type="EMDB" id="EMD-4183"/>
<dbReference type="EMDB" id="EMD-4982"/>
<dbReference type="EMDB" id="EMD-4984"/>
<dbReference type="EMDB" id="EMD-4985"/>
<dbReference type="EMDB" id="EMD-4987"/>
<dbReference type="EMDB" id="EMD-7530"/>
<dbReference type="EMDB" id="EMD-7531"/>
<dbReference type="EMDB" id="EMD-7532"/>
<dbReference type="EMDB" id="EMD-7533"/>
<dbReference type="EMDB" id="EMD-8771"/>
<dbReference type="EMDB" id="EMD-8773"/>
<dbReference type="EMDB" id="EMD-8774"/>
<dbReference type="EMDB" id="EMD-8775"/>
<dbReference type="EMDB" id="EMD-8776"/>
<dbReference type="EMDB" id="EMD-8777"/>
<dbReference type="SMR" id="P28000"/>
<dbReference type="BioGRID" id="35712">
    <property type="interactions" value="357"/>
</dbReference>
<dbReference type="ComplexPortal" id="CPX-1664">
    <property type="entry name" value="DNA-directed RNA Polymerase I complex"/>
</dbReference>
<dbReference type="ComplexPortal" id="CPX-2660">
    <property type="entry name" value="DNA-directed RNA polymerase III complex"/>
</dbReference>
<dbReference type="DIP" id="DIP-130N"/>
<dbReference type="FunCoup" id="P28000">
    <property type="interactions" value="726"/>
</dbReference>
<dbReference type="IntAct" id="P28000">
    <property type="interactions" value="57"/>
</dbReference>
<dbReference type="MINT" id="P28000"/>
<dbReference type="STRING" id="4932.YNL113W"/>
<dbReference type="iPTMnet" id="P28000"/>
<dbReference type="PaxDb" id="4932-YNL113W"/>
<dbReference type="PeptideAtlas" id="P28000"/>
<dbReference type="EnsemblFungi" id="YNL113W_mRNA">
    <property type="protein sequence ID" value="YNL113W"/>
    <property type="gene ID" value="YNL113W"/>
</dbReference>
<dbReference type="GeneID" id="855609"/>
<dbReference type="KEGG" id="sce:YNL113W"/>
<dbReference type="AGR" id="SGD:S000005057"/>
<dbReference type="SGD" id="S000005057">
    <property type="gene designation" value="RPC19"/>
</dbReference>
<dbReference type="VEuPathDB" id="FungiDB:YNL113W"/>
<dbReference type="eggNOG" id="KOG3438">
    <property type="taxonomic scope" value="Eukaryota"/>
</dbReference>
<dbReference type="GeneTree" id="ENSGT00550000075160"/>
<dbReference type="HOGENOM" id="CLU_090381_3_0_1"/>
<dbReference type="InParanoid" id="P28000"/>
<dbReference type="OMA" id="MRIQMYD"/>
<dbReference type="OrthoDB" id="510325at2759"/>
<dbReference type="BioCyc" id="YEAST:G3O-33137-MONOMER"/>
<dbReference type="BioGRID-ORCS" id="855609">
    <property type="hits" value="7 hits in 10 CRISPR screens"/>
</dbReference>
<dbReference type="CD-CODE" id="BDAE0F88">
    <property type="entry name" value="Nucleolus"/>
</dbReference>
<dbReference type="EvolutionaryTrace" id="P28000"/>
<dbReference type="PRO" id="PR:P28000"/>
<dbReference type="Proteomes" id="UP000002311">
    <property type="component" value="Chromosome XIV"/>
</dbReference>
<dbReference type="RNAct" id="P28000">
    <property type="molecule type" value="protein"/>
</dbReference>
<dbReference type="GO" id="GO:0005654">
    <property type="term" value="C:nucleoplasm"/>
    <property type="evidence" value="ECO:0000304"/>
    <property type="project" value="Reactome"/>
</dbReference>
<dbReference type="GO" id="GO:0005634">
    <property type="term" value="C:nucleus"/>
    <property type="evidence" value="ECO:0000314"/>
    <property type="project" value="ComplexPortal"/>
</dbReference>
<dbReference type="GO" id="GO:0005736">
    <property type="term" value="C:RNA polymerase I complex"/>
    <property type="evidence" value="ECO:0000314"/>
    <property type="project" value="UniProtKB"/>
</dbReference>
<dbReference type="GO" id="GO:0005666">
    <property type="term" value="C:RNA polymerase III complex"/>
    <property type="evidence" value="ECO:0000314"/>
    <property type="project" value="SGD"/>
</dbReference>
<dbReference type="GO" id="GO:0003677">
    <property type="term" value="F:DNA binding"/>
    <property type="evidence" value="ECO:0007669"/>
    <property type="project" value="InterPro"/>
</dbReference>
<dbReference type="GO" id="GO:0003899">
    <property type="term" value="F:DNA-directed RNA polymerase activity"/>
    <property type="evidence" value="ECO:0000314"/>
    <property type="project" value="UniProtKB"/>
</dbReference>
<dbReference type="GO" id="GO:0046983">
    <property type="term" value="F:protein dimerization activity"/>
    <property type="evidence" value="ECO:0007669"/>
    <property type="project" value="InterPro"/>
</dbReference>
<dbReference type="GO" id="GO:0042790">
    <property type="term" value="P:nucleolar large rRNA transcription by RNA polymerase I"/>
    <property type="evidence" value="ECO:0000314"/>
    <property type="project" value="ComplexPortal"/>
</dbReference>
<dbReference type="GO" id="GO:0042254">
    <property type="term" value="P:ribosome biogenesis"/>
    <property type="evidence" value="ECO:0007669"/>
    <property type="project" value="UniProtKB-KW"/>
</dbReference>
<dbReference type="GO" id="GO:0006363">
    <property type="term" value="P:termination of RNA polymerase I transcription"/>
    <property type="evidence" value="ECO:0000314"/>
    <property type="project" value="ComplexPortal"/>
</dbReference>
<dbReference type="GO" id="GO:0006386">
    <property type="term" value="P:termination of RNA polymerase III transcription"/>
    <property type="evidence" value="ECO:0000314"/>
    <property type="project" value="ComplexPortal"/>
</dbReference>
<dbReference type="GO" id="GO:0006360">
    <property type="term" value="P:transcription by RNA polymerase I"/>
    <property type="evidence" value="ECO:0000314"/>
    <property type="project" value="UniProtKB"/>
</dbReference>
<dbReference type="GO" id="GO:0006383">
    <property type="term" value="P:transcription by RNA polymerase III"/>
    <property type="evidence" value="ECO:0000314"/>
    <property type="project" value="ComplexPortal"/>
</dbReference>
<dbReference type="GO" id="GO:0006362">
    <property type="term" value="P:transcription elongation by RNA polymerase I"/>
    <property type="evidence" value="ECO:0000314"/>
    <property type="project" value="ComplexPortal"/>
</dbReference>
<dbReference type="GO" id="GO:0006361">
    <property type="term" value="P:transcription initiation at RNA polymerase I promoter"/>
    <property type="evidence" value="ECO:0000314"/>
    <property type="project" value="ComplexPortal"/>
</dbReference>
<dbReference type="GO" id="GO:0006384">
    <property type="term" value="P:transcription initiation at RNA polymerase III promoter"/>
    <property type="evidence" value="ECO:0000314"/>
    <property type="project" value="ComplexPortal"/>
</dbReference>
<dbReference type="GO" id="GO:0042797">
    <property type="term" value="P:tRNA transcription by RNA polymerase III"/>
    <property type="evidence" value="ECO:0000314"/>
    <property type="project" value="SGD"/>
</dbReference>
<dbReference type="CDD" id="cd07029">
    <property type="entry name" value="RNAP_I_III_AC19"/>
    <property type="match status" value="1"/>
</dbReference>
<dbReference type="FunFam" id="3.30.1360.10:FF:000012">
    <property type="entry name" value="DNA-directed RNA polymerases I and III subunit RPAC2"/>
    <property type="match status" value="1"/>
</dbReference>
<dbReference type="Gene3D" id="3.30.1360.10">
    <property type="entry name" value="RNA polymerase, RBP11-like subunit"/>
    <property type="match status" value="1"/>
</dbReference>
<dbReference type="HAMAP" id="MF_00261">
    <property type="entry name" value="RNApol_arch_Rpo11"/>
    <property type="match status" value="1"/>
</dbReference>
<dbReference type="InterPro" id="IPR036603">
    <property type="entry name" value="RBP11-like"/>
</dbReference>
<dbReference type="InterPro" id="IPR009025">
    <property type="entry name" value="RBP11-like_dimer"/>
</dbReference>
<dbReference type="InterPro" id="IPR008193">
    <property type="entry name" value="RNA_pol_Rpb11_13-16kDa_CS"/>
</dbReference>
<dbReference type="InterPro" id="IPR033898">
    <property type="entry name" value="RNAP_AC19"/>
</dbReference>
<dbReference type="InterPro" id="IPR022905">
    <property type="entry name" value="Rpo11-like"/>
</dbReference>
<dbReference type="PANTHER" id="PTHR13946">
    <property type="entry name" value="DNA-DIRECTED RNA POLYMERASE I,II,III"/>
    <property type="match status" value="1"/>
</dbReference>
<dbReference type="PANTHER" id="PTHR13946:SF28">
    <property type="entry name" value="DNA-DIRECTED RNA POLYMERASES I AND III SUBUNIT RPAC2"/>
    <property type="match status" value="1"/>
</dbReference>
<dbReference type="Pfam" id="PF13656">
    <property type="entry name" value="RNA_pol_L_2"/>
    <property type="match status" value="1"/>
</dbReference>
<dbReference type="SUPFAM" id="SSF55257">
    <property type="entry name" value="RBP11-like subunits of RNA polymerase"/>
    <property type="match status" value="1"/>
</dbReference>
<dbReference type="PROSITE" id="PS01154">
    <property type="entry name" value="RNA_POL_L_13KD"/>
    <property type="match status" value="1"/>
</dbReference>
<name>RPAC2_YEAST</name>
<accession>P28000</accession>
<accession>D6W168</accession>
<protein>
    <recommendedName>
        <fullName>DNA-directed RNA polymerases I and III subunit RPAC2</fullName>
        <shortName>RNA polymerases I and III subunit AC2</shortName>
    </recommendedName>
    <alternativeName>
        <fullName>AC19</fullName>
    </alternativeName>
    <alternativeName>
        <fullName>DNA-directed RNA polymerases I and III 16 kDa polypeptide</fullName>
    </alternativeName>
    <alternativeName>
        <fullName>RPA19</fullName>
    </alternativeName>
</protein>
<gene>
    <name type="primary">RPC19</name>
    <name type="ordered locus">YNL113W</name>
    <name type="ORF">N1937</name>
</gene>
<organism>
    <name type="scientific">Saccharomyces cerevisiae (strain ATCC 204508 / S288c)</name>
    <name type="common">Baker's yeast</name>
    <dbReference type="NCBI Taxonomy" id="559292"/>
    <lineage>
        <taxon>Eukaryota</taxon>
        <taxon>Fungi</taxon>
        <taxon>Dikarya</taxon>
        <taxon>Ascomycota</taxon>
        <taxon>Saccharomycotina</taxon>
        <taxon>Saccharomycetes</taxon>
        <taxon>Saccharomycetales</taxon>
        <taxon>Saccharomycetaceae</taxon>
        <taxon>Saccharomyces</taxon>
    </lineage>
</organism>
<feature type="chain" id="PRO_0000149319" description="DNA-directed RNA polymerases I and III subunit RPAC2">
    <location>
        <begin position="1"/>
        <end position="142"/>
    </location>
</feature>
<feature type="region of interest" description="Disordered" evidence="1">
    <location>
        <begin position="1"/>
        <end position="45"/>
    </location>
</feature>
<feature type="compositionally biased region" description="Basic and acidic residues" evidence="1">
    <location>
        <begin position="1"/>
        <end position="11"/>
    </location>
</feature>
<feature type="compositionally biased region" description="Acidic residues" evidence="1">
    <location>
        <begin position="24"/>
        <end position="42"/>
    </location>
</feature>
<feature type="modified residue" description="Phosphothreonine" evidence="11 12">
    <location>
        <position position="15"/>
    </location>
</feature>
<feature type="modified residue" description="Phosphothreonine" evidence="10 11 12">
    <location>
        <position position="33"/>
    </location>
</feature>
<feature type="cross-link" description="Glycyl lysine isopeptide (Lys-Gly) (interchain with G-Cter in ubiquitin)" evidence="13">
    <location>
        <position position="134"/>
    </location>
</feature>
<feature type="strand" evidence="16">
    <location>
        <begin position="46"/>
        <end position="49"/>
    </location>
</feature>
<feature type="turn" evidence="14">
    <location>
        <begin position="51"/>
        <end position="53"/>
    </location>
</feature>
<feature type="strand" evidence="16">
    <location>
        <begin position="56"/>
        <end position="67"/>
    </location>
</feature>
<feature type="helix" evidence="16">
    <location>
        <begin position="70"/>
        <end position="80"/>
    </location>
</feature>
<feature type="strand" evidence="16">
    <location>
        <begin position="86"/>
        <end position="92"/>
    </location>
</feature>
<feature type="strand" evidence="15">
    <location>
        <begin position="96"/>
        <end position="98"/>
    </location>
</feature>
<feature type="strand" evidence="16">
    <location>
        <begin position="100"/>
        <end position="107"/>
    </location>
</feature>
<feature type="strand" evidence="16">
    <location>
        <begin position="109"/>
        <end position="111"/>
    </location>
</feature>
<feature type="helix" evidence="16">
    <location>
        <begin position="113"/>
        <end position="139"/>
    </location>
</feature>